<gene>
    <name evidence="1" type="primary">psbY</name>
    <name type="ordered locus">Npun_F5002</name>
</gene>
<protein>
    <recommendedName>
        <fullName evidence="1">Photosystem II reaction center protein Y</fullName>
    </recommendedName>
</protein>
<dbReference type="EMBL" id="CP001037">
    <property type="protein sequence ID" value="ACC83346.1"/>
    <property type="molecule type" value="Genomic_DNA"/>
</dbReference>
<dbReference type="RefSeq" id="WP_012411301.1">
    <property type="nucleotide sequence ID" value="NC_010628.1"/>
</dbReference>
<dbReference type="SMR" id="B2J1B5"/>
<dbReference type="STRING" id="63737.Npun_F5002"/>
<dbReference type="EnsemblBacteria" id="ACC83346">
    <property type="protein sequence ID" value="ACC83346"/>
    <property type="gene ID" value="Npun_F5002"/>
</dbReference>
<dbReference type="KEGG" id="npu:Npun_F5002"/>
<dbReference type="eggNOG" id="ENOG5033BVG">
    <property type="taxonomic scope" value="Bacteria"/>
</dbReference>
<dbReference type="HOGENOM" id="CLU_218393_1_0_3"/>
<dbReference type="PhylomeDB" id="B2J1B5"/>
<dbReference type="Proteomes" id="UP000001191">
    <property type="component" value="Chromosome"/>
</dbReference>
<dbReference type="GO" id="GO:0009523">
    <property type="term" value="C:photosystem II"/>
    <property type="evidence" value="ECO:0007669"/>
    <property type="project" value="UniProtKB-KW"/>
</dbReference>
<dbReference type="GO" id="GO:0031676">
    <property type="term" value="C:plasma membrane-derived thylakoid membrane"/>
    <property type="evidence" value="ECO:0007669"/>
    <property type="project" value="UniProtKB-SubCell"/>
</dbReference>
<dbReference type="GO" id="GO:0030145">
    <property type="term" value="F:manganese ion binding"/>
    <property type="evidence" value="ECO:0007669"/>
    <property type="project" value="InterPro"/>
</dbReference>
<dbReference type="GO" id="GO:0015979">
    <property type="term" value="P:photosynthesis"/>
    <property type="evidence" value="ECO:0007669"/>
    <property type="project" value="UniProtKB-UniRule"/>
</dbReference>
<dbReference type="HAMAP" id="MF_00717">
    <property type="entry name" value="PSII_PsbY"/>
    <property type="match status" value="1"/>
</dbReference>
<dbReference type="InterPro" id="IPR009388">
    <property type="entry name" value="PSII_PsbY"/>
</dbReference>
<dbReference type="NCBIfam" id="NF009711">
    <property type="entry name" value="PRK13240.1"/>
    <property type="match status" value="1"/>
</dbReference>
<dbReference type="Pfam" id="PF06298">
    <property type="entry name" value="PsbY"/>
    <property type="match status" value="1"/>
</dbReference>
<evidence type="ECO:0000255" key="1">
    <source>
        <dbReference type="HAMAP-Rule" id="MF_00717"/>
    </source>
</evidence>
<proteinExistence type="inferred from homology"/>
<sequence>MDIDYRIAIVLAPVVIAASWAVFNIGAAALRQIQGFLDREA</sequence>
<accession>B2J1B5</accession>
<comment type="function">
    <text evidence="1">Loosely associated component of the core of photosystem II (PSII), it is not always seen in crystals. PSII is a light-driven water plastoquinone oxidoreductase, using light energy to abstract electrons from H(2)O, generating a proton gradient subsequently used for ATP formation.</text>
</comment>
<comment type="subunit">
    <text evidence="1">PSII is composed of 1 copy each of membrane proteins PsbA, PsbB, PsbC, PsbD, PsbE, PsbF, PsbH, PsbI, PsbJ, PsbK, PsbL, PsbM, PsbT, PsbX, PsbY, PsbZ, Psb30/Ycf12, peripheral proteins PsbO, CyanoQ (PsbQ), PsbU, PsbV and a large number of cofactors. It forms dimeric complexes.</text>
</comment>
<comment type="subcellular location">
    <subcellularLocation>
        <location evidence="1">Cellular thylakoid membrane</location>
        <topology evidence="1">Single-pass membrane protein</topology>
    </subcellularLocation>
</comment>
<comment type="similarity">
    <text evidence="1">Belongs to the PsbY family.</text>
</comment>
<name>PSBY_NOSP7</name>
<reference key="1">
    <citation type="journal article" date="2013" name="Plant Physiol.">
        <title>A Nostoc punctiforme Sugar Transporter Necessary to Establish a Cyanobacterium-Plant Symbiosis.</title>
        <authorList>
            <person name="Ekman M."/>
            <person name="Picossi S."/>
            <person name="Campbell E.L."/>
            <person name="Meeks J.C."/>
            <person name="Flores E."/>
        </authorList>
    </citation>
    <scope>NUCLEOTIDE SEQUENCE [LARGE SCALE GENOMIC DNA]</scope>
    <source>
        <strain>ATCC 29133 / PCC 73102</strain>
    </source>
</reference>
<feature type="chain" id="PRO_1000192885" description="Photosystem II reaction center protein Y">
    <location>
        <begin position="1"/>
        <end position="41"/>
    </location>
</feature>
<feature type="transmembrane region" description="Helical" evidence="1">
    <location>
        <begin position="7"/>
        <end position="25"/>
    </location>
</feature>
<organism>
    <name type="scientific">Nostoc punctiforme (strain ATCC 29133 / PCC 73102)</name>
    <dbReference type="NCBI Taxonomy" id="63737"/>
    <lineage>
        <taxon>Bacteria</taxon>
        <taxon>Bacillati</taxon>
        <taxon>Cyanobacteriota</taxon>
        <taxon>Cyanophyceae</taxon>
        <taxon>Nostocales</taxon>
        <taxon>Nostocaceae</taxon>
        <taxon>Nostoc</taxon>
    </lineage>
</organism>
<keyword id="KW-0472">Membrane</keyword>
<keyword id="KW-0602">Photosynthesis</keyword>
<keyword id="KW-0604">Photosystem II</keyword>
<keyword id="KW-1185">Reference proteome</keyword>
<keyword id="KW-0793">Thylakoid</keyword>
<keyword id="KW-0812">Transmembrane</keyword>
<keyword id="KW-1133">Transmembrane helix</keyword>